<reference key="1">
    <citation type="journal article" date="1997" name="Nature">
        <title>The nucleotide sequence of Saccharomyces cerevisiae chromosome XVI.</title>
        <authorList>
            <person name="Bussey H."/>
            <person name="Storms R.K."/>
            <person name="Ahmed A."/>
            <person name="Albermann K."/>
            <person name="Allen E."/>
            <person name="Ansorge W."/>
            <person name="Araujo R."/>
            <person name="Aparicio A."/>
            <person name="Barrell B.G."/>
            <person name="Badcock K."/>
            <person name="Benes V."/>
            <person name="Botstein D."/>
            <person name="Bowman S."/>
            <person name="Brueckner M."/>
            <person name="Carpenter J."/>
            <person name="Cherry J.M."/>
            <person name="Chung E."/>
            <person name="Churcher C.M."/>
            <person name="Coster F."/>
            <person name="Davis K."/>
            <person name="Davis R.W."/>
            <person name="Dietrich F.S."/>
            <person name="Delius H."/>
            <person name="DiPaolo T."/>
            <person name="Dubois E."/>
            <person name="Duesterhoeft A."/>
            <person name="Duncan M."/>
            <person name="Floeth M."/>
            <person name="Fortin N."/>
            <person name="Friesen J.D."/>
            <person name="Fritz C."/>
            <person name="Goffeau A."/>
            <person name="Hall J."/>
            <person name="Hebling U."/>
            <person name="Heumann K."/>
            <person name="Hilbert H."/>
            <person name="Hillier L.W."/>
            <person name="Hunicke-Smith S."/>
            <person name="Hyman R.W."/>
            <person name="Johnston M."/>
            <person name="Kalman S."/>
            <person name="Kleine K."/>
            <person name="Komp C."/>
            <person name="Kurdi O."/>
            <person name="Lashkari D."/>
            <person name="Lew H."/>
            <person name="Lin A."/>
            <person name="Lin D."/>
            <person name="Louis E.J."/>
            <person name="Marathe R."/>
            <person name="Messenguy F."/>
            <person name="Mewes H.-W."/>
            <person name="Mirtipati S."/>
            <person name="Moestl D."/>
            <person name="Mueller-Auer S."/>
            <person name="Namath A."/>
            <person name="Nentwich U."/>
            <person name="Oefner P."/>
            <person name="Pearson D."/>
            <person name="Petel F.X."/>
            <person name="Pohl T.M."/>
            <person name="Purnelle B."/>
            <person name="Rajandream M.A."/>
            <person name="Rechmann S."/>
            <person name="Rieger M."/>
            <person name="Riles L."/>
            <person name="Roberts D."/>
            <person name="Schaefer M."/>
            <person name="Scharfe M."/>
            <person name="Scherens B."/>
            <person name="Schramm S."/>
            <person name="Schroeder M."/>
            <person name="Sdicu A.-M."/>
            <person name="Tettelin H."/>
            <person name="Urrestarazu L.A."/>
            <person name="Ushinsky S."/>
            <person name="Vierendeels F."/>
            <person name="Vissers S."/>
            <person name="Voss H."/>
            <person name="Walsh S.V."/>
            <person name="Wambutt R."/>
            <person name="Wang Y."/>
            <person name="Wedler E."/>
            <person name="Wedler H."/>
            <person name="Winnett E."/>
            <person name="Zhong W.-W."/>
            <person name="Zollner A."/>
            <person name="Vo D.H."/>
            <person name="Hani J."/>
        </authorList>
    </citation>
    <scope>NUCLEOTIDE SEQUENCE [LARGE SCALE GENOMIC DNA]</scope>
    <source>
        <strain>ATCC 204508 / S288c</strain>
    </source>
</reference>
<reference key="2">
    <citation type="journal article" date="2014" name="G3 (Bethesda)">
        <title>The reference genome sequence of Saccharomyces cerevisiae: Then and now.</title>
        <authorList>
            <person name="Engel S.R."/>
            <person name="Dietrich F.S."/>
            <person name="Fisk D.G."/>
            <person name="Binkley G."/>
            <person name="Balakrishnan R."/>
            <person name="Costanzo M.C."/>
            <person name="Dwight S.S."/>
            <person name="Hitz B.C."/>
            <person name="Karra K."/>
            <person name="Nash R.S."/>
            <person name="Weng S."/>
            <person name="Wong E.D."/>
            <person name="Lloyd P."/>
            <person name="Skrzypek M.S."/>
            <person name="Miyasato S.R."/>
            <person name="Simison M."/>
            <person name="Cherry J.M."/>
        </authorList>
    </citation>
    <scope>GENOME REANNOTATION</scope>
    <source>
        <strain>ATCC 204508 / S288c</strain>
    </source>
</reference>
<reference key="3">
    <citation type="journal article" date="2007" name="Genome Res.">
        <title>Approaching a complete repository of sequence-verified protein-encoding clones for Saccharomyces cerevisiae.</title>
        <authorList>
            <person name="Hu Y."/>
            <person name="Rolfs A."/>
            <person name="Bhullar B."/>
            <person name="Murthy T.V.S."/>
            <person name="Zhu C."/>
            <person name="Berger M.F."/>
            <person name="Camargo A.A."/>
            <person name="Kelley F."/>
            <person name="McCarron S."/>
            <person name="Jepson D."/>
            <person name="Richardson A."/>
            <person name="Raphael J."/>
            <person name="Moreira D."/>
            <person name="Taycher E."/>
            <person name="Zuo D."/>
            <person name="Mohr S."/>
            <person name="Kane M.F."/>
            <person name="Williamson J."/>
            <person name="Simpson A.J.G."/>
            <person name="Bulyk M.L."/>
            <person name="Harlow E."/>
            <person name="Marsischky G."/>
            <person name="Kolodner R.D."/>
            <person name="LaBaer J."/>
        </authorList>
    </citation>
    <scope>NUCLEOTIDE SEQUENCE [GENOMIC DNA]</scope>
    <source>
        <strain>ATCC 204508 / S288c</strain>
    </source>
</reference>
<reference key="4">
    <citation type="journal article" date="1999" name="J. Biol. Chem.">
        <title>Cloning of murine translation initiation factor 6 and functional analysis of the homologous sequence YPR016c in Saccharomyces cerevisiae.</title>
        <authorList>
            <person name="Wood L.C."/>
            <person name="Ashby M.N."/>
            <person name="Grunfeld C."/>
            <person name="Feingold K.R."/>
        </authorList>
    </citation>
    <scope>CHARACTERIZATION</scope>
    <scope>SUBCELLULAR LOCATION</scope>
</reference>
<reference key="5">
    <citation type="journal article" date="1999" name="J. Cell Biol.">
        <title>The beta4 integrin interactor p27(BBP/eIF6) is an essential nuclear matrix protein involved in 60S ribosomal subunit assembly.</title>
        <authorList>
            <person name="Sanvito F."/>
            <person name="Piatti S."/>
            <person name="Villa A."/>
            <person name="Bossi M."/>
            <person name="Lucchini G."/>
            <person name="Marchisio P.C."/>
            <person name="Biffo S."/>
        </authorList>
    </citation>
    <scope>FUNCTION</scope>
</reference>
<reference key="6">
    <citation type="journal article" date="1999" name="Mol. Cell. Biol.">
        <title>The Saccharomyces cerevisiae homologue of mammalian translation initiation factor 6 does not function as a translation initiation factor.</title>
        <authorList>
            <person name="Si K."/>
            <person name="Maitra U."/>
        </authorList>
    </citation>
    <scope>CHARACTERIZATION</scope>
</reference>
<reference key="7">
    <citation type="journal article" date="2001" name="Mol. Cell">
        <title>The nucle(ol)ar Tif6p and Efl1p are required for a late cytoplasmic step of ribosome synthesis.</title>
        <authorList>
            <person name="Senger B."/>
            <person name="Lafontaine D.L.J."/>
            <person name="Graindorge J.-S."/>
            <person name="Gadal O."/>
            <person name="Camasses A."/>
            <person name="Sanni A."/>
            <person name="Garnier J.-M."/>
            <person name="Breitenbach M."/>
            <person name="Hurt E."/>
            <person name="Fasiolo F."/>
        </authorList>
    </citation>
    <scope>FUNCTION</scope>
    <scope>SUBCELLULAR LOCATION</scope>
</reference>
<reference key="8">
    <citation type="journal article" date="2001" name="Mol. Cell. Biol.">
        <title>The Saccharomyces cerevisiae TIF6 gene encoding translation initiation factor 6 is required for 60S ribosomal subunit biogenesis.</title>
        <authorList>
            <person name="Basu U."/>
            <person name="Si K."/>
            <person name="Warner J.R."/>
            <person name="Maitra U."/>
        </authorList>
    </citation>
    <scope>FUNCTION</scope>
    <scope>SUBCELLULAR LOCATION</scope>
</reference>
<reference key="9">
    <citation type="journal article" date="2003" name="Mol. Cell. Biol.">
        <title>Phosphorylation of mammalian eukaryotic translation initiation factor 6 and its Saccharomyces cerevisiae homologue Tif6p: evidence that phosphorylation of Tif6p regulates its nucleocytoplasmic distribution and is required for yeast cell growth.</title>
        <authorList>
            <person name="Basu U."/>
            <person name="Si K."/>
            <person name="Deng H."/>
            <person name="Maitra U."/>
        </authorList>
    </citation>
    <scope>PHOSPHORYLATION</scope>
    <scope>NUCLEOCYTOPLASMIC SHUTTLING</scope>
</reference>
<reference key="10">
    <citation type="journal article" date="2003" name="Nature">
        <title>Global analysis of protein expression in yeast.</title>
        <authorList>
            <person name="Ghaemmaghami S."/>
            <person name="Huh W.-K."/>
            <person name="Bower K."/>
            <person name="Howson R.W."/>
            <person name="Belle A."/>
            <person name="Dephoure N."/>
            <person name="O'Shea E.K."/>
            <person name="Weissman J.S."/>
        </authorList>
    </citation>
    <scope>LEVEL OF PROTEIN EXPRESSION [LARGE SCALE ANALYSIS]</scope>
</reference>
<reference key="11">
    <citation type="journal article" date="2007" name="J. Proteome Res.">
        <title>Large-scale phosphorylation analysis of alpha-factor-arrested Saccharomyces cerevisiae.</title>
        <authorList>
            <person name="Li X."/>
            <person name="Gerber S.A."/>
            <person name="Rudner A.D."/>
            <person name="Beausoleil S.A."/>
            <person name="Haas W."/>
            <person name="Villen J."/>
            <person name="Elias J.E."/>
            <person name="Gygi S.P."/>
        </authorList>
    </citation>
    <scope>PHOSPHORYLATION [LARGE SCALE ANALYSIS] AT SER-231</scope>
    <scope>IDENTIFICATION BY MASS SPECTROMETRY [LARGE SCALE ANALYSIS]</scope>
    <source>
        <strain>ADR376</strain>
    </source>
</reference>
<reference key="12">
    <citation type="journal article" date="2007" name="Nat. Genet.">
        <title>The Shwachman-Bodian-Diamond syndrome protein mediates translational activation of ribosomes in yeast.</title>
        <authorList>
            <person name="Menne T.F."/>
            <person name="Goyenechea B."/>
            <person name="Sanchez-Puig N."/>
            <person name="Wong C.C."/>
            <person name="Tonkin L.M."/>
            <person name="Ancliff P.J."/>
            <person name="Brost R.L."/>
            <person name="Costanzo M."/>
            <person name="Boone C."/>
            <person name="Warren A.J."/>
        </authorList>
    </citation>
    <scope>FUNCTION</scope>
    <scope>SUBCELLULAR LOCATION</scope>
</reference>
<reference key="13">
    <citation type="journal article" date="2008" name="J. Biol. Chem.">
        <title>The Saccharomyces cerevisiae 60 S ribosome biogenesis factor Tif6p is regulated by Hrr25p-mediated phosphorylation.</title>
        <authorList>
            <person name="Ray P."/>
            <person name="Basu U."/>
            <person name="Ray A."/>
            <person name="Majumdar R."/>
            <person name="Deng H."/>
            <person name="Maitra U."/>
        </authorList>
    </citation>
    <scope>FUNCTION</scope>
    <scope>PHOSPHORYLATION AT SER-174</scope>
</reference>
<reference key="14">
    <citation type="journal article" date="2008" name="Mol. Cell. Proteomics">
        <title>A multidimensional chromatography technology for in-depth phosphoproteome analysis.</title>
        <authorList>
            <person name="Albuquerque C.P."/>
            <person name="Smolka M.B."/>
            <person name="Payne S.H."/>
            <person name="Bafna V."/>
            <person name="Eng J."/>
            <person name="Zhou H."/>
        </authorList>
    </citation>
    <scope>IDENTIFICATION BY MASS SPECTROMETRY [LARGE SCALE ANALYSIS]</scope>
</reference>
<reference key="15">
    <citation type="journal article" date="2009" name="Science">
        <title>Global analysis of Cdk1 substrate phosphorylation sites provides insights into evolution.</title>
        <authorList>
            <person name="Holt L.J."/>
            <person name="Tuch B.B."/>
            <person name="Villen J."/>
            <person name="Johnson A.D."/>
            <person name="Gygi S.P."/>
            <person name="Morgan D.O."/>
        </authorList>
    </citation>
    <scope>PHOSPHORYLATION [LARGE SCALE ANALYSIS] AT SER-231</scope>
    <scope>IDENTIFICATION BY MASS SPECTROMETRY [LARGE SCALE ANALYSIS]</scope>
</reference>
<reference key="16">
    <citation type="journal article" date="2000" name="Nat. Struct. Biol.">
        <title>Crystal structures of ribosome anti-association factor IF6.</title>
        <authorList>
            <person name="Groft C.M."/>
            <person name="Beckmann R."/>
            <person name="Sali A."/>
            <person name="Burley S.K."/>
        </authorList>
    </citation>
    <scope>X-RAY CRYSTALLOGRAPHY (1.3 ANGSTROMS)</scope>
    <scope>FUNCTION</scope>
</reference>
<reference key="17">
    <citation type="journal article" date="2010" name="J. Biol. Chem.">
        <title>Mechanism of eIF6-mediated inhibition of ribosomal subunit joining.</title>
        <authorList>
            <person name="Gartmann M."/>
            <person name="Blau M."/>
            <person name="Armache J.P."/>
            <person name="Mielke T."/>
            <person name="Topf M."/>
            <person name="Beckmann R."/>
        </authorList>
    </citation>
    <scope>STRUCTURE BY ELECTRON MICROSCOPY (11.8 ANGSTROMS) OF 1-224</scope>
</reference>
<reference key="18">
    <citation type="journal article" date="2023" name="Mol. Cell">
        <title>Molecular basis of eIF5A-dependent CAT tailing in eukaryotic ribosome-associated quality control.</title>
        <authorList>
            <person name="Tesina P."/>
            <person name="Ebine S."/>
            <person name="Buschauer R."/>
            <person name="Thoms M."/>
            <person name="Matsuo Y."/>
            <person name="Inada T."/>
            <person name="Beckmann R."/>
        </authorList>
    </citation>
    <scope>STRUCTURE BY ELECTRON MICROSCOPY (2.7 ANGSTROMS) IN COMPLEX WITH RQC2; HYP2; RKK1 AND 60S RIBOSOMAL SUBUNIT</scope>
</reference>
<keyword id="KW-0002">3D-structure</keyword>
<keyword id="KW-0963">Cytoplasm</keyword>
<keyword id="KW-0396">Initiation factor</keyword>
<keyword id="KW-0539">Nucleus</keyword>
<keyword id="KW-0597">Phosphoprotein</keyword>
<keyword id="KW-0648">Protein biosynthesis</keyword>
<keyword id="KW-1185">Reference proteome</keyword>
<keyword id="KW-0690">Ribosome biogenesis</keyword>
<accession>Q12522</accession>
<accession>D6W426</accession>
<dbReference type="EMBL" id="Z71255">
    <property type="protein sequence ID" value="CAA95012.1"/>
    <property type="molecule type" value="Genomic_DNA"/>
</dbReference>
<dbReference type="EMBL" id="Z49919">
    <property type="protein sequence ID" value="CAA90161.1"/>
    <property type="molecule type" value="Genomic_DNA"/>
</dbReference>
<dbReference type="EMBL" id="U31900">
    <property type="protein sequence ID" value="AAA97594.1"/>
    <property type="molecule type" value="Genomic_DNA"/>
</dbReference>
<dbReference type="EMBL" id="AY692916">
    <property type="protein sequence ID" value="AAT92935.1"/>
    <property type="molecule type" value="Genomic_DNA"/>
</dbReference>
<dbReference type="EMBL" id="BK006949">
    <property type="protein sequence ID" value="DAA11442.1"/>
    <property type="molecule type" value="Genomic_DNA"/>
</dbReference>
<dbReference type="PIR" id="S57550">
    <property type="entry name" value="S57550"/>
</dbReference>
<dbReference type="RefSeq" id="NP_015341.1">
    <property type="nucleotide sequence ID" value="NM_001184113.1"/>
</dbReference>
<dbReference type="PDB" id="1G62">
    <property type="method" value="X-ray"/>
    <property type="resolution" value="2.50 A"/>
    <property type="chains" value="A=1-224"/>
</dbReference>
<dbReference type="PDB" id="2X7N">
    <property type="method" value="EM"/>
    <property type="resolution" value="11.80 A"/>
    <property type="chains" value="B=1-224"/>
</dbReference>
<dbReference type="PDB" id="3J2I">
    <property type="method" value="EM"/>
    <property type="resolution" value="11.90 A"/>
    <property type="chains" value="B=1-245"/>
</dbReference>
<dbReference type="PDB" id="3JCT">
    <property type="method" value="EM"/>
    <property type="resolution" value="3.08 A"/>
    <property type="chains" value="y=1-245"/>
</dbReference>
<dbReference type="PDB" id="4V7F">
    <property type="method" value="EM"/>
    <property type="resolution" value="8.70 A"/>
    <property type="chains" value="m=1-245"/>
</dbReference>
<dbReference type="PDB" id="5H4P">
    <property type="method" value="EM"/>
    <property type="resolution" value="3.07 A"/>
    <property type="chains" value="y=1-227"/>
</dbReference>
<dbReference type="PDB" id="5JCS">
    <property type="method" value="EM"/>
    <property type="resolution" value="9.50 A"/>
    <property type="chains" value="m=1-245"/>
</dbReference>
<dbReference type="PDB" id="5T62">
    <property type="method" value="EM"/>
    <property type="resolution" value="3.30 A"/>
    <property type="chains" value="X=1-245"/>
</dbReference>
<dbReference type="PDB" id="5Z3G">
    <property type="method" value="EM"/>
    <property type="resolution" value="3.65 A"/>
    <property type="chains" value="N=1-245"/>
</dbReference>
<dbReference type="PDB" id="6C0F">
    <property type="method" value="EM"/>
    <property type="resolution" value="3.70 A"/>
    <property type="chains" value="y=1-245"/>
</dbReference>
<dbReference type="PDB" id="6ELZ">
    <property type="method" value="EM"/>
    <property type="resolution" value="3.30 A"/>
    <property type="chains" value="y=1-245"/>
</dbReference>
<dbReference type="PDB" id="6EM1">
    <property type="method" value="EM"/>
    <property type="resolution" value="3.60 A"/>
    <property type="chains" value="y=1-245"/>
</dbReference>
<dbReference type="PDB" id="6EM4">
    <property type="method" value="EM"/>
    <property type="resolution" value="4.10 A"/>
    <property type="chains" value="y=1-245"/>
</dbReference>
<dbReference type="PDB" id="6EM5">
    <property type="method" value="EM"/>
    <property type="resolution" value="4.30 A"/>
    <property type="chains" value="y=1-245"/>
</dbReference>
<dbReference type="PDB" id="6FT6">
    <property type="method" value="EM"/>
    <property type="resolution" value="3.90 A"/>
    <property type="chains" value="y=1-245"/>
</dbReference>
<dbReference type="PDB" id="6M62">
    <property type="method" value="EM"/>
    <property type="resolution" value="3.20 A"/>
    <property type="chains" value="y=1-245"/>
</dbReference>
<dbReference type="PDB" id="6N8J">
    <property type="method" value="EM"/>
    <property type="resolution" value="3.50 A"/>
    <property type="chains" value="y=1-245"/>
</dbReference>
<dbReference type="PDB" id="6N8K">
    <property type="method" value="EM"/>
    <property type="resolution" value="3.60 A"/>
    <property type="chains" value="y=1-245"/>
</dbReference>
<dbReference type="PDB" id="6N8L">
    <property type="method" value="EM"/>
    <property type="resolution" value="3.60 A"/>
    <property type="chains" value="y=1-245"/>
</dbReference>
<dbReference type="PDB" id="6N8M">
    <property type="method" value="EM"/>
    <property type="resolution" value="3.50 A"/>
    <property type="chains" value="X=1-245"/>
</dbReference>
<dbReference type="PDB" id="6N8N">
    <property type="method" value="EM"/>
    <property type="resolution" value="3.80 A"/>
    <property type="chains" value="X=1-245"/>
</dbReference>
<dbReference type="PDB" id="6N8O">
    <property type="method" value="EM"/>
    <property type="resolution" value="3.50 A"/>
    <property type="chains" value="X=1-245"/>
</dbReference>
<dbReference type="PDB" id="6QIK">
    <property type="method" value="EM"/>
    <property type="resolution" value="3.10 A"/>
    <property type="chains" value="n=1-245"/>
</dbReference>
<dbReference type="PDB" id="6QT0">
    <property type="method" value="EM"/>
    <property type="resolution" value="3.40 A"/>
    <property type="chains" value="n=1-245"/>
</dbReference>
<dbReference type="PDB" id="6QTZ">
    <property type="method" value="EM"/>
    <property type="resolution" value="3.50 A"/>
    <property type="chains" value="n=1-245"/>
</dbReference>
<dbReference type="PDB" id="6R84">
    <property type="method" value="EM"/>
    <property type="resolution" value="3.60 A"/>
    <property type="chains" value="X=1-224"/>
</dbReference>
<dbReference type="PDB" id="6R86">
    <property type="method" value="EM"/>
    <property type="resolution" value="3.40 A"/>
    <property type="chains" value="X=1-224"/>
</dbReference>
<dbReference type="PDB" id="6R87">
    <property type="method" value="EM"/>
    <property type="resolution" value="3.40 A"/>
    <property type="chains" value="X=1-224"/>
</dbReference>
<dbReference type="PDB" id="6RI5">
    <property type="method" value="EM"/>
    <property type="resolution" value="3.30 A"/>
    <property type="chains" value="n=1-245"/>
</dbReference>
<dbReference type="PDB" id="6RZZ">
    <property type="method" value="EM"/>
    <property type="resolution" value="3.20 A"/>
    <property type="chains" value="n=1-245"/>
</dbReference>
<dbReference type="PDB" id="6S05">
    <property type="method" value="EM"/>
    <property type="resolution" value="3.90 A"/>
    <property type="chains" value="n=1-245"/>
</dbReference>
<dbReference type="PDB" id="6YLG">
    <property type="method" value="EM"/>
    <property type="resolution" value="3.00 A"/>
    <property type="chains" value="y=1-245"/>
</dbReference>
<dbReference type="PDB" id="6YLH">
    <property type="method" value="EM"/>
    <property type="resolution" value="3.10 A"/>
    <property type="chains" value="y=1-245"/>
</dbReference>
<dbReference type="PDB" id="6YLX">
    <property type="method" value="EM"/>
    <property type="resolution" value="3.90 A"/>
    <property type="chains" value="y=1-245"/>
</dbReference>
<dbReference type="PDB" id="6YLY">
    <property type="method" value="EM"/>
    <property type="resolution" value="3.80 A"/>
    <property type="chains" value="y=1-245"/>
</dbReference>
<dbReference type="PDB" id="7BT6">
    <property type="method" value="EM"/>
    <property type="resolution" value="3.12 A"/>
    <property type="chains" value="y=1-245"/>
</dbReference>
<dbReference type="PDB" id="7BTB">
    <property type="method" value="EM"/>
    <property type="resolution" value="3.22 A"/>
    <property type="chains" value="y=1-245"/>
</dbReference>
<dbReference type="PDB" id="7NAC">
    <property type="method" value="EM"/>
    <property type="resolution" value="3.04 A"/>
    <property type="chains" value="y=1-245"/>
</dbReference>
<dbReference type="PDB" id="7NAF">
    <property type="method" value="EM"/>
    <property type="resolution" value="3.13 A"/>
    <property type="chains" value="y=1-245"/>
</dbReference>
<dbReference type="PDB" id="7OF1">
    <property type="method" value="EM"/>
    <property type="resolution" value="3.10 A"/>
    <property type="chains" value="y=1-245"/>
</dbReference>
<dbReference type="PDB" id="7OH3">
    <property type="method" value="EM"/>
    <property type="resolution" value="3.40 A"/>
    <property type="chains" value="y=1-245"/>
</dbReference>
<dbReference type="PDB" id="7OHP">
    <property type="method" value="EM"/>
    <property type="resolution" value="3.90 A"/>
    <property type="chains" value="y=1-245"/>
</dbReference>
<dbReference type="PDB" id="7OHQ">
    <property type="method" value="EM"/>
    <property type="resolution" value="3.10 A"/>
    <property type="chains" value="y=1-245"/>
</dbReference>
<dbReference type="PDB" id="7OHR">
    <property type="method" value="EM"/>
    <property type="resolution" value="4.72 A"/>
    <property type="chains" value="y=1-245"/>
</dbReference>
<dbReference type="PDB" id="7OHS">
    <property type="method" value="EM"/>
    <property type="resolution" value="4.38 A"/>
    <property type="chains" value="y=1-245"/>
</dbReference>
<dbReference type="PDB" id="7OHT">
    <property type="method" value="EM"/>
    <property type="resolution" value="4.70 A"/>
    <property type="chains" value="y=1-245"/>
</dbReference>
<dbReference type="PDB" id="7OHU">
    <property type="method" value="EM"/>
    <property type="resolution" value="3.70 A"/>
    <property type="chains" value="y=1-245"/>
</dbReference>
<dbReference type="PDB" id="7OHV">
    <property type="method" value="EM"/>
    <property type="resolution" value="3.90 A"/>
    <property type="chains" value="y=1-245"/>
</dbReference>
<dbReference type="PDB" id="7OHW">
    <property type="method" value="EM"/>
    <property type="resolution" value="3.50 A"/>
    <property type="chains" value="y=1-245"/>
</dbReference>
<dbReference type="PDB" id="7OHX">
    <property type="method" value="EM"/>
    <property type="resolution" value="3.30 A"/>
    <property type="chains" value="y=1-245"/>
</dbReference>
<dbReference type="PDB" id="7OHY">
    <property type="method" value="EM"/>
    <property type="resolution" value="3.90 A"/>
    <property type="chains" value="y=1-245"/>
</dbReference>
<dbReference type="PDB" id="7R7A">
    <property type="method" value="EM"/>
    <property type="resolution" value="3.04 A"/>
    <property type="chains" value="y=1-245"/>
</dbReference>
<dbReference type="PDB" id="7U0H">
    <property type="method" value="EM"/>
    <property type="resolution" value="2.76 A"/>
    <property type="chains" value="y=1-245"/>
</dbReference>
<dbReference type="PDB" id="7UG6">
    <property type="method" value="EM"/>
    <property type="resolution" value="2.90 A"/>
    <property type="chains" value="y=1-245"/>
</dbReference>
<dbReference type="PDB" id="7UOO">
    <property type="method" value="EM"/>
    <property type="resolution" value="2.34 A"/>
    <property type="chains" value="y=1-245"/>
</dbReference>
<dbReference type="PDB" id="7UQB">
    <property type="method" value="EM"/>
    <property type="resolution" value="2.43 A"/>
    <property type="chains" value="y=1-245"/>
</dbReference>
<dbReference type="PDB" id="7UQZ">
    <property type="method" value="EM"/>
    <property type="resolution" value="2.44 A"/>
    <property type="chains" value="y=1-244"/>
</dbReference>
<dbReference type="PDB" id="7V08">
    <property type="method" value="EM"/>
    <property type="resolution" value="2.36 A"/>
    <property type="chains" value="y=1-245"/>
</dbReference>
<dbReference type="PDB" id="7Z34">
    <property type="method" value="EM"/>
    <property type="resolution" value="3.80 A"/>
    <property type="chains" value="y=1-245"/>
</dbReference>
<dbReference type="PDB" id="7ZS5">
    <property type="method" value="EM"/>
    <property type="resolution" value="3.20 A"/>
    <property type="chains" value="A=1-224"/>
</dbReference>
<dbReference type="PDB" id="8AAF">
    <property type="method" value="EM"/>
    <property type="resolution" value="2.50 A"/>
    <property type="chains" value="g=1-245"/>
</dbReference>
<dbReference type="PDB" id="8AGT">
    <property type="method" value="EM"/>
    <property type="resolution" value="2.60 A"/>
    <property type="chains" value="g=1-245"/>
</dbReference>
<dbReference type="PDB" id="8AGU">
    <property type="method" value="EM"/>
    <property type="resolution" value="2.70 A"/>
    <property type="chains" value="g=1-245"/>
</dbReference>
<dbReference type="PDB" id="8AGV">
    <property type="method" value="EM"/>
    <property type="resolution" value="2.60 A"/>
    <property type="chains" value="g=1-245"/>
</dbReference>
<dbReference type="PDB" id="8AGW">
    <property type="method" value="EM"/>
    <property type="resolution" value="2.60 A"/>
    <property type="chains" value="g=1-245"/>
</dbReference>
<dbReference type="PDB" id="8AGZ">
    <property type="method" value="EM"/>
    <property type="resolution" value="2.60 A"/>
    <property type="chains" value="g=1-245"/>
</dbReference>
<dbReference type="PDB" id="8HFR">
    <property type="method" value="EM"/>
    <property type="resolution" value="2.64 A"/>
    <property type="chains" value="yE=1-245"/>
</dbReference>
<dbReference type="PDB" id="8V83">
    <property type="method" value="EM"/>
    <property type="resolution" value="2.53 A"/>
    <property type="chains" value="y=1-245"/>
</dbReference>
<dbReference type="PDB" id="8V84">
    <property type="method" value="EM"/>
    <property type="resolution" value="2.70 A"/>
    <property type="chains" value="y=1-245"/>
</dbReference>
<dbReference type="PDB" id="8V87">
    <property type="method" value="EM"/>
    <property type="resolution" value="2.66 A"/>
    <property type="chains" value="y=1-245"/>
</dbReference>
<dbReference type="PDBsum" id="1G62"/>
<dbReference type="PDBsum" id="2X7N"/>
<dbReference type="PDBsum" id="3J2I"/>
<dbReference type="PDBsum" id="3JCT"/>
<dbReference type="PDBsum" id="4V7F"/>
<dbReference type="PDBsum" id="5H4P"/>
<dbReference type="PDBsum" id="5JCS"/>
<dbReference type="PDBsum" id="5T62"/>
<dbReference type="PDBsum" id="5Z3G"/>
<dbReference type="PDBsum" id="6C0F"/>
<dbReference type="PDBsum" id="6ELZ"/>
<dbReference type="PDBsum" id="6EM1"/>
<dbReference type="PDBsum" id="6EM4"/>
<dbReference type="PDBsum" id="6EM5"/>
<dbReference type="PDBsum" id="6FT6"/>
<dbReference type="PDBsum" id="6M62"/>
<dbReference type="PDBsum" id="6N8J"/>
<dbReference type="PDBsum" id="6N8K"/>
<dbReference type="PDBsum" id="6N8L"/>
<dbReference type="PDBsum" id="6N8M"/>
<dbReference type="PDBsum" id="6N8N"/>
<dbReference type="PDBsum" id="6N8O"/>
<dbReference type="PDBsum" id="6QIK"/>
<dbReference type="PDBsum" id="6QT0"/>
<dbReference type="PDBsum" id="6QTZ"/>
<dbReference type="PDBsum" id="6R84"/>
<dbReference type="PDBsum" id="6R86"/>
<dbReference type="PDBsum" id="6R87"/>
<dbReference type="PDBsum" id="6RI5"/>
<dbReference type="PDBsum" id="6RZZ"/>
<dbReference type="PDBsum" id="6S05"/>
<dbReference type="PDBsum" id="6YLG"/>
<dbReference type="PDBsum" id="6YLH"/>
<dbReference type="PDBsum" id="6YLX"/>
<dbReference type="PDBsum" id="6YLY"/>
<dbReference type="PDBsum" id="7BT6"/>
<dbReference type="PDBsum" id="7BTB"/>
<dbReference type="PDBsum" id="7NAC"/>
<dbReference type="PDBsum" id="7NAF"/>
<dbReference type="PDBsum" id="7OF1"/>
<dbReference type="PDBsum" id="7OH3"/>
<dbReference type="PDBsum" id="7OHP"/>
<dbReference type="PDBsum" id="7OHQ"/>
<dbReference type="PDBsum" id="7OHR"/>
<dbReference type="PDBsum" id="7OHS"/>
<dbReference type="PDBsum" id="7OHT"/>
<dbReference type="PDBsum" id="7OHU"/>
<dbReference type="PDBsum" id="7OHV"/>
<dbReference type="PDBsum" id="7OHW"/>
<dbReference type="PDBsum" id="7OHX"/>
<dbReference type="PDBsum" id="7OHY"/>
<dbReference type="PDBsum" id="7R7A"/>
<dbReference type="PDBsum" id="7U0H"/>
<dbReference type="PDBsum" id="7UG6"/>
<dbReference type="PDBsum" id="7UOO"/>
<dbReference type="PDBsum" id="7UQB"/>
<dbReference type="PDBsum" id="7UQZ"/>
<dbReference type="PDBsum" id="7V08"/>
<dbReference type="PDBsum" id="7Z34"/>
<dbReference type="PDBsum" id="7ZS5"/>
<dbReference type="PDBsum" id="8AAF"/>
<dbReference type="PDBsum" id="8AGT"/>
<dbReference type="PDBsum" id="8AGU"/>
<dbReference type="PDBsum" id="8AGV"/>
<dbReference type="PDBsum" id="8AGW"/>
<dbReference type="PDBsum" id="8AGZ"/>
<dbReference type="PDBsum" id="8HFR"/>
<dbReference type="PDBsum" id="8V83"/>
<dbReference type="PDBsum" id="8V84"/>
<dbReference type="PDBsum" id="8V87"/>
<dbReference type="EMDB" id="EMD-0369"/>
<dbReference type="EMDB" id="EMD-0370"/>
<dbReference type="EMDB" id="EMD-0371"/>
<dbReference type="EMDB" id="EMD-0372"/>
<dbReference type="EMDB" id="EMD-0373"/>
<dbReference type="EMDB" id="EMD-0374"/>
<dbReference type="EMDB" id="EMD-10068"/>
<dbReference type="EMDB" id="EMD-10071"/>
<dbReference type="EMDB" id="EMD-10838"/>
<dbReference type="EMDB" id="EMD-10839"/>
<dbReference type="EMDB" id="EMD-10841"/>
<dbReference type="EMDB" id="EMD-10842"/>
<dbReference type="EMDB" id="EMD-12866"/>
<dbReference type="EMDB" id="EMD-12892"/>
<dbReference type="EMDB" id="EMD-12904"/>
<dbReference type="EMDB" id="EMD-12905"/>
<dbReference type="EMDB" id="EMD-12906"/>
<dbReference type="EMDB" id="EMD-12907"/>
<dbReference type="EMDB" id="EMD-12908"/>
<dbReference type="EMDB" id="EMD-12909"/>
<dbReference type="EMDB" id="EMD-12910"/>
<dbReference type="EMDB" id="EMD-12911"/>
<dbReference type="EMDB" id="EMD-12912"/>
<dbReference type="EMDB" id="EMD-12913"/>
<dbReference type="EMDB" id="EMD-14471"/>
<dbReference type="EMDB" id="EMD-14926"/>
<dbReference type="EMDB" id="EMD-15296"/>
<dbReference type="EMDB" id="EMD-15423"/>
<dbReference type="EMDB" id="EMD-15424"/>
<dbReference type="EMDB" id="EMD-15425"/>
<dbReference type="EMDB" id="EMD-15426"/>
<dbReference type="EMDB" id="EMD-15428"/>
<dbReference type="EMDB" id="EMD-1705"/>
<dbReference type="EMDB" id="EMD-24269"/>
<dbReference type="EMDB" id="EMD-24271"/>
<dbReference type="EMDB" id="EMD-24296"/>
<dbReference type="EMDB" id="EMD-26259"/>
<dbReference type="EMDB" id="EMD-26485"/>
<dbReference type="EMDB" id="EMD-26651"/>
<dbReference type="EMDB" id="EMD-26686"/>
<dbReference type="EMDB" id="EMD-26703"/>
<dbReference type="EMDB" id="EMD-26941"/>
<dbReference type="EMDB" id="EMD-30108"/>
<dbReference type="EMDB" id="EMD-30170"/>
<dbReference type="EMDB" id="EMD-30174"/>
<dbReference type="EMDB" id="EMD-34725"/>
<dbReference type="EMDB" id="EMD-43017"/>
<dbReference type="EMDB" id="EMD-4302"/>
<dbReference type="EMDB" id="EMD-43021"/>
<dbReference type="EMDB" id="EMD-43027"/>
<dbReference type="EMDB" id="EMD-4560"/>
<dbReference type="EMDB" id="EMD-4630"/>
<dbReference type="EMDB" id="EMD-4636"/>
<dbReference type="EMDB" id="EMD-4751"/>
<dbReference type="EMDB" id="EMD-4752"/>
<dbReference type="EMDB" id="EMD-4753"/>
<dbReference type="EMDB" id="EMD-4884"/>
<dbReference type="EMDB" id="EMD-6878"/>
<dbReference type="EMDB" id="EMD-7324"/>
<dbReference type="EMDB" id="EMD-8362"/>
<dbReference type="SMR" id="Q12522"/>
<dbReference type="BioGRID" id="36193">
    <property type="interactions" value="645"/>
</dbReference>
<dbReference type="DIP" id="DIP-5395N"/>
<dbReference type="FunCoup" id="Q12522">
    <property type="interactions" value="1353"/>
</dbReference>
<dbReference type="IntAct" id="Q12522">
    <property type="interactions" value="114"/>
</dbReference>
<dbReference type="MINT" id="Q12522"/>
<dbReference type="STRING" id="4932.YPR016C"/>
<dbReference type="iPTMnet" id="Q12522"/>
<dbReference type="PaxDb" id="4932-YPR016C"/>
<dbReference type="PeptideAtlas" id="Q12522"/>
<dbReference type="EnsemblFungi" id="YPR016C_mRNA">
    <property type="protein sequence ID" value="YPR016C"/>
    <property type="gene ID" value="YPR016C"/>
</dbReference>
<dbReference type="GeneID" id="856126"/>
<dbReference type="KEGG" id="sce:YPR016C"/>
<dbReference type="AGR" id="SGD:S000006220"/>
<dbReference type="SGD" id="S000006220">
    <property type="gene designation" value="TIF6"/>
</dbReference>
<dbReference type="VEuPathDB" id="FungiDB:YPR016C"/>
<dbReference type="eggNOG" id="KOG3185">
    <property type="taxonomic scope" value="Eukaryota"/>
</dbReference>
<dbReference type="GeneTree" id="ENSGT00390000015972"/>
<dbReference type="HOGENOM" id="CLU_071894_0_0_1"/>
<dbReference type="InParanoid" id="Q12522"/>
<dbReference type="OMA" id="WCAFCGM"/>
<dbReference type="OrthoDB" id="4155914at2759"/>
<dbReference type="BioCyc" id="YEAST:G3O-34176-MONOMER"/>
<dbReference type="BioGRID-ORCS" id="856126">
    <property type="hits" value="2 hits in 10 CRISPR screens"/>
</dbReference>
<dbReference type="CD-CODE" id="BDAE0F88">
    <property type="entry name" value="Nucleolus"/>
</dbReference>
<dbReference type="EvolutionaryTrace" id="Q12522"/>
<dbReference type="PRO" id="PR:Q12522"/>
<dbReference type="Proteomes" id="UP000002311">
    <property type="component" value="Chromosome XVI"/>
</dbReference>
<dbReference type="RNAct" id="Q12522">
    <property type="molecule type" value="protein"/>
</dbReference>
<dbReference type="GO" id="GO:0005737">
    <property type="term" value="C:cytoplasm"/>
    <property type="evidence" value="ECO:0000314"/>
    <property type="project" value="SGD"/>
</dbReference>
<dbReference type="GO" id="GO:0005829">
    <property type="term" value="C:cytosol"/>
    <property type="evidence" value="ECO:0000318"/>
    <property type="project" value="GO_Central"/>
</dbReference>
<dbReference type="GO" id="GO:0005730">
    <property type="term" value="C:nucleolus"/>
    <property type="evidence" value="ECO:0000314"/>
    <property type="project" value="SGD"/>
</dbReference>
<dbReference type="GO" id="GO:0005634">
    <property type="term" value="C:nucleus"/>
    <property type="evidence" value="ECO:0000314"/>
    <property type="project" value="SGD"/>
</dbReference>
<dbReference type="GO" id="GO:0030687">
    <property type="term" value="C:preribosome, large subunit precursor"/>
    <property type="evidence" value="ECO:0000314"/>
    <property type="project" value="SGD"/>
</dbReference>
<dbReference type="GO" id="GO:0043023">
    <property type="term" value="F:ribosomal large subunit binding"/>
    <property type="evidence" value="ECO:0000314"/>
    <property type="project" value="SGD"/>
</dbReference>
<dbReference type="GO" id="GO:0003743">
    <property type="term" value="F:translation initiation factor activity"/>
    <property type="evidence" value="ECO:0007669"/>
    <property type="project" value="UniProtKB-UniRule"/>
</dbReference>
<dbReference type="GO" id="GO:1902626">
    <property type="term" value="P:assembly of large subunit precursor of preribosome"/>
    <property type="evidence" value="ECO:0000315"/>
    <property type="project" value="SGD"/>
</dbReference>
<dbReference type="GO" id="GO:0042256">
    <property type="term" value="P:cytosolic ribosome assembly"/>
    <property type="evidence" value="ECO:0007669"/>
    <property type="project" value="UniProtKB-UniRule"/>
</dbReference>
<dbReference type="GO" id="GO:0000460">
    <property type="term" value="P:maturation of 5.8S rRNA"/>
    <property type="evidence" value="ECO:0000318"/>
    <property type="project" value="GO_Central"/>
</dbReference>
<dbReference type="GO" id="GO:0000466">
    <property type="term" value="P:maturation of 5.8S rRNA from tricistronic rRNA transcript (SSU-rRNA, 5.8S rRNA, LSU-rRNA)"/>
    <property type="evidence" value="ECO:0000315"/>
    <property type="project" value="SGD"/>
</dbReference>
<dbReference type="GO" id="GO:0000470">
    <property type="term" value="P:maturation of LSU-rRNA"/>
    <property type="evidence" value="ECO:0000318"/>
    <property type="project" value="GO_Central"/>
</dbReference>
<dbReference type="GO" id="GO:0000463">
    <property type="term" value="P:maturation of LSU-rRNA from tricistronic rRNA transcript (SSU-rRNA, 5.8S rRNA, LSU-rRNA)"/>
    <property type="evidence" value="ECO:0000315"/>
    <property type="project" value="SGD"/>
</dbReference>
<dbReference type="GO" id="GO:0042273">
    <property type="term" value="P:ribosomal large subunit biogenesis"/>
    <property type="evidence" value="ECO:0000315"/>
    <property type="project" value="SGD"/>
</dbReference>
<dbReference type="GO" id="GO:0000054">
    <property type="term" value="P:ribosomal subunit export from nucleus"/>
    <property type="evidence" value="ECO:0000316"/>
    <property type="project" value="SGD"/>
</dbReference>
<dbReference type="GO" id="GO:0006364">
    <property type="term" value="P:rRNA processing"/>
    <property type="evidence" value="ECO:0000316"/>
    <property type="project" value="SGD"/>
</dbReference>
<dbReference type="CDD" id="cd00527">
    <property type="entry name" value="IF6"/>
    <property type="match status" value="1"/>
</dbReference>
<dbReference type="FunFam" id="3.75.10.10:FF:000001">
    <property type="entry name" value="Eukaryotic translation initiation factor 6"/>
    <property type="match status" value="1"/>
</dbReference>
<dbReference type="Gene3D" id="3.75.10.10">
    <property type="entry name" value="L-arginine/glycine Amidinotransferase, Chain A"/>
    <property type="match status" value="1"/>
</dbReference>
<dbReference type="HAMAP" id="MF_00032">
    <property type="entry name" value="eIF_6"/>
    <property type="match status" value="1"/>
</dbReference>
<dbReference type="InterPro" id="IPR002769">
    <property type="entry name" value="eIF6"/>
</dbReference>
<dbReference type="NCBIfam" id="TIGR00323">
    <property type="entry name" value="eIF-6"/>
    <property type="match status" value="1"/>
</dbReference>
<dbReference type="PANTHER" id="PTHR10784">
    <property type="entry name" value="TRANSLATION INITIATION FACTOR 6"/>
    <property type="match status" value="1"/>
</dbReference>
<dbReference type="Pfam" id="PF01912">
    <property type="entry name" value="eIF-6"/>
    <property type="match status" value="1"/>
</dbReference>
<dbReference type="PIRSF" id="PIRSF006413">
    <property type="entry name" value="IF-6"/>
    <property type="match status" value="1"/>
</dbReference>
<dbReference type="SMART" id="SM00654">
    <property type="entry name" value="eIF6"/>
    <property type="match status" value="1"/>
</dbReference>
<dbReference type="SUPFAM" id="SSF55909">
    <property type="entry name" value="Pentein"/>
    <property type="match status" value="1"/>
</dbReference>
<evidence type="ECO:0000255" key="1">
    <source>
        <dbReference type="HAMAP-Rule" id="MF_03132"/>
    </source>
</evidence>
<evidence type="ECO:0000269" key="2">
    <source>
    </source>
</evidence>
<evidence type="ECO:0000269" key="3">
    <source>
    </source>
</evidence>
<evidence type="ECO:0000269" key="4">
    <source>
    </source>
</evidence>
<evidence type="ECO:0000269" key="5">
    <source>
    </source>
</evidence>
<evidence type="ECO:0000269" key="6">
    <source>
    </source>
</evidence>
<evidence type="ECO:0000269" key="7">
    <source>
    </source>
</evidence>
<evidence type="ECO:0000269" key="8">
    <source>
    </source>
</evidence>
<evidence type="ECO:0000269" key="9">
    <source>
    </source>
</evidence>
<evidence type="ECO:0007744" key="10">
    <source>
    </source>
</evidence>
<evidence type="ECO:0007744" key="11">
    <source>
    </source>
</evidence>
<evidence type="ECO:0007829" key="12">
    <source>
        <dbReference type="PDB" id="1G62"/>
    </source>
</evidence>
<evidence type="ECO:0007829" key="13">
    <source>
        <dbReference type="PDB" id="7NAF"/>
    </source>
</evidence>
<gene>
    <name evidence="1" type="primary">TIF6</name>
    <name type="synonym">CDC95</name>
    <name type="ordered locus">YPR016C</name>
    <name type="ORF">LPZ15C</name>
</gene>
<sequence>MATRTQFENSNEIGVFSKLTNTYCLVAVGGSENFYSAFEAELGDAIPIVHTTIAGTRIIGRMTAGNRRGLLVPTQTTDQELQHLRNSLPDSVKIQRVEERLSALGNVICCNDYVALVHPDIDRETEELISDVLGVEVFRQTISGNILVGSYCSLSNQGGLVHPQTSVQDQEELSSLLQVPLVAGTVNRGSSVVGAGMVVNDYLAVTGLDTTAPELSVIESIFRLQDAQPESISGNLRDTLIETYS</sequence>
<feature type="chain" id="PRO_0000153742" description="Eukaryotic translation initiation factor 6">
    <location>
        <begin position="1"/>
        <end position="245"/>
    </location>
</feature>
<feature type="modified residue" description="Phosphoserine; by CK1" evidence="1">
    <location>
        <position position="174"/>
    </location>
</feature>
<feature type="modified residue" description="Phosphoserine; by CK1" evidence="1">
    <location>
        <position position="175"/>
    </location>
</feature>
<feature type="modified residue" description="Phosphoserine" evidence="10 11">
    <location>
        <position position="231"/>
    </location>
</feature>
<feature type="strand" evidence="12">
    <location>
        <begin position="2"/>
        <end position="5"/>
    </location>
</feature>
<feature type="strand" evidence="13">
    <location>
        <begin position="7"/>
        <end position="9"/>
    </location>
</feature>
<feature type="helix" evidence="12">
    <location>
        <begin position="13"/>
        <end position="16"/>
    </location>
</feature>
<feature type="strand" evidence="12">
    <location>
        <begin position="17"/>
        <end position="19"/>
    </location>
</feature>
<feature type="strand" evidence="12">
    <location>
        <begin position="24"/>
        <end position="27"/>
    </location>
</feature>
<feature type="helix" evidence="12">
    <location>
        <begin position="32"/>
        <end position="42"/>
    </location>
</feature>
<feature type="turn" evidence="12">
    <location>
        <begin position="43"/>
        <end position="45"/>
    </location>
</feature>
<feature type="strand" evidence="12">
    <location>
        <begin position="48"/>
        <end position="51"/>
    </location>
</feature>
<feature type="strand" evidence="13">
    <location>
        <begin position="53"/>
        <end position="55"/>
    </location>
</feature>
<feature type="helix" evidence="12">
    <location>
        <begin position="59"/>
        <end position="62"/>
    </location>
</feature>
<feature type="strand" evidence="12">
    <location>
        <begin position="67"/>
        <end position="73"/>
    </location>
</feature>
<feature type="helix" evidence="12">
    <location>
        <begin position="78"/>
        <end position="87"/>
    </location>
</feature>
<feature type="strand" evidence="12">
    <location>
        <begin position="92"/>
        <end position="97"/>
    </location>
</feature>
<feature type="helix" evidence="12">
    <location>
        <begin position="104"/>
        <end position="107"/>
    </location>
</feature>
<feature type="strand" evidence="12">
    <location>
        <begin position="108"/>
        <end position="110"/>
    </location>
</feature>
<feature type="strand" evidence="12">
    <location>
        <begin position="112"/>
        <end position="117"/>
    </location>
</feature>
<feature type="helix" evidence="12">
    <location>
        <begin position="123"/>
        <end position="133"/>
    </location>
</feature>
<feature type="strand" evidence="12">
    <location>
        <begin position="135"/>
        <end position="139"/>
    </location>
</feature>
<feature type="helix" evidence="12">
    <location>
        <begin position="148"/>
        <end position="150"/>
    </location>
</feature>
<feature type="strand" evidence="12">
    <location>
        <begin position="151"/>
        <end position="154"/>
    </location>
</feature>
<feature type="strand" evidence="12">
    <location>
        <begin position="159"/>
        <end position="161"/>
    </location>
</feature>
<feature type="helix" evidence="12">
    <location>
        <begin position="167"/>
        <end position="177"/>
    </location>
</feature>
<feature type="strand" evidence="12">
    <location>
        <begin position="181"/>
        <end position="183"/>
    </location>
</feature>
<feature type="turn" evidence="12">
    <location>
        <begin position="187"/>
        <end position="189"/>
    </location>
</feature>
<feature type="helix" evidence="12">
    <location>
        <begin position="193"/>
        <end position="196"/>
    </location>
</feature>
<feature type="strand" evidence="12">
    <location>
        <begin position="197"/>
        <end position="199"/>
    </location>
</feature>
<feature type="strand" evidence="12">
    <location>
        <begin position="204"/>
        <end position="207"/>
    </location>
</feature>
<feature type="helix" evidence="12">
    <location>
        <begin position="212"/>
        <end position="221"/>
    </location>
</feature>
<organism>
    <name type="scientific">Saccharomyces cerevisiae (strain ATCC 204508 / S288c)</name>
    <name type="common">Baker's yeast</name>
    <dbReference type="NCBI Taxonomy" id="559292"/>
    <lineage>
        <taxon>Eukaryota</taxon>
        <taxon>Fungi</taxon>
        <taxon>Dikarya</taxon>
        <taxon>Ascomycota</taxon>
        <taxon>Saccharomycotina</taxon>
        <taxon>Saccharomycetes</taxon>
        <taxon>Saccharomycetales</taxon>
        <taxon>Saccharomycetaceae</taxon>
        <taxon>Saccharomyces</taxon>
    </lineage>
</organism>
<protein>
    <recommendedName>
        <fullName evidence="1">Eukaryotic translation initiation factor 6</fullName>
        <shortName evidence="1">eIF-6</shortName>
    </recommendedName>
</protein>
<comment type="function">
    <text evidence="1 2 3 4 5 8 9">Binds to the 60S ribosomal subunit and prevents its association with the 40S ribosomal subunit to form the 80S initiation complex in the cytoplasm. Is also involved in ribosome biogenesis. Associates with pre-60S subunits in the nucleus and is involved in its nuclear export. Cytoplasmic release of TIF6 from 60S subunits and nuclear relocalization is promoted by the GTPase RIA1/EFL1 and by SDO1. Also required for pre-rRNA processing.</text>
</comment>
<comment type="subunit">
    <text>Monomer. Associates with the 60S ribosomal subunit.</text>
</comment>
<comment type="interaction">
    <interactant intactId="EBI-9046">
        <id>Q12522</id>
    </interactant>
    <interactant intactId="EBI-3775">
        <id>Q08235</id>
        <label>BRX1</label>
    </interactant>
    <organismsDiffer>false</organismsDiffer>
    <experiments>3</experiments>
</comment>
<comment type="interaction">
    <interactant intactId="EBI-9046">
        <id>Q12522</id>
    </interactant>
    <interactant intactId="EBI-23885">
        <id>P53145</id>
        <label>LSG1</label>
    </interactant>
    <organismsDiffer>false</organismsDiffer>
    <experiments>6</experiments>
</comment>
<comment type="interaction">
    <interactant intactId="EBI-9046">
        <id>Q12522</id>
    </interactant>
    <interactant intactId="EBI-28532">
        <id>P53742</id>
        <label>NOG2</label>
    </interactant>
    <organismsDiffer>false</organismsDiffer>
    <experiments>5</experiments>
</comment>
<comment type="interaction">
    <interactant intactId="EBI-9046">
        <id>Q12522</id>
    </interactant>
    <interactant intactId="EBI-14322">
        <id>Q02256</id>
        <label>YVH1</label>
    </interactant>
    <organismsDiffer>false</organismsDiffer>
    <experiments>3</experiments>
</comment>
<comment type="subcellular location">
    <subcellularLocation>
        <location>Cytoplasm</location>
    </subcellularLocation>
    <subcellularLocation>
        <location>Nucleus</location>
        <location>Nucleolus</location>
    </subcellularLocation>
    <text>Shuttles between cytoplasm and nucleus/nucleolus.</text>
</comment>
<comment type="PTM">
    <text evidence="1 6 9">Phosphorylation at Ser-174 and Ser-175 promotes nuclear export.</text>
</comment>
<comment type="miscellaneous">
    <text evidence="7">Present with 18600 molecules/cell in log phase SD medium.</text>
</comment>
<comment type="similarity">
    <text evidence="1">Belongs to the eIF-6 family.</text>
</comment>
<name>IF6_YEAST</name>
<proteinExistence type="evidence at protein level"/>